<evidence type="ECO:0000250" key="1"/>
<evidence type="ECO:0000250" key="2">
    <source>
        <dbReference type="UniProtKB" id="P49917"/>
    </source>
</evidence>
<evidence type="ECO:0000250" key="3">
    <source>
        <dbReference type="UniProtKB" id="Q9LL84"/>
    </source>
</evidence>
<evidence type="ECO:0000255" key="4"/>
<evidence type="ECO:0000255" key="5">
    <source>
        <dbReference type="PROSITE-ProRule" id="PRU00033"/>
    </source>
</evidence>
<evidence type="ECO:0000255" key="6">
    <source>
        <dbReference type="PROSITE-ProRule" id="PRU10135"/>
    </source>
</evidence>
<evidence type="ECO:0000256" key="7">
    <source>
        <dbReference type="SAM" id="MobiDB-lite"/>
    </source>
</evidence>
<evidence type="ECO:0000305" key="8"/>
<proteinExistence type="evidence at transcript level"/>
<keyword id="KW-0067">ATP-binding</keyword>
<keyword id="KW-0227">DNA damage</keyword>
<keyword id="KW-0233">DNA recombination</keyword>
<keyword id="KW-0234">DNA repair</keyword>
<keyword id="KW-0436">Ligase</keyword>
<keyword id="KW-0460">Magnesium</keyword>
<keyword id="KW-0479">Metal-binding</keyword>
<keyword id="KW-0547">Nucleotide-binding</keyword>
<keyword id="KW-0539">Nucleus</keyword>
<keyword id="KW-1185">Reference proteome</keyword>
<keyword id="KW-0677">Repeat</keyword>
<gene>
    <name type="primary">LIG4</name>
    <name type="ordered locus">Os04g0606450</name>
    <name type="ordered locus">LOC_Os04g51700</name>
    <name type="ORF">OSJNBa0035M09.8</name>
</gene>
<feature type="chain" id="PRO_0000247468" description="Putative DNA ligase 4">
    <location>
        <begin position="1"/>
        <end position="1322"/>
    </location>
</feature>
<feature type="domain" description="BRCT 1" evidence="5">
    <location>
        <begin position="686"/>
        <end position="768"/>
    </location>
</feature>
<feature type="domain" description="BRCT 2" evidence="5">
    <location>
        <begin position="825"/>
        <end position="935"/>
    </location>
</feature>
<feature type="region of interest" description="Disordered" evidence="7">
    <location>
        <begin position="945"/>
        <end position="1212"/>
    </location>
</feature>
<feature type="region of interest" description="Disordered" evidence="7">
    <location>
        <begin position="1245"/>
        <end position="1310"/>
    </location>
</feature>
<feature type="compositionally biased region" description="Basic and acidic residues" evidence="7">
    <location>
        <begin position="957"/>
        <end position="969"/>
    </location>
</feature>
<feature type="compositionally biased region" description="Basic residues" evidence="7">
    <location>
        <begin position="970"/>
        <end position="979"/>
    </location>
</feature>
<feature type="compositionally biased region" description="Basic residues" evidence="7">
    <location>
        <begin position="994"/>
        <end position="1005"/>
    </location>
</feature>
<feature type="compositionally biased region" description="Basic and acidic residues" evidence="7">
    <location>
        <begin position="1007"/>
        <end position="1022"/>
    </location>
</feature>
<feature type="compositionally biased region" description="Basic and acidic residues" evidence="7">
    <location>
        <begin position="1033"/>
        <end position="1047"/>
    </location>
</feature>
<feature type="compositionally biased region" description="Basic residues" evidence="7">
    <location>
        <begin position="1051"/>
        <end position="1063"/>
    </location>
</feature>
<feature type="compositionally biased region" description="Basic and acidic residues" evidence="7">
    <location>
        <begin position="1082"/>
        <end position="1104"/>
    </location>
</feature>
<feature type="compositionally biased region" description="Basic and acidic residues" evidence="7">
    <location>
        <begin position="1125"/>
        <end position="1161"/>
    </location>
</feature>
<feature type="compositionally biased region" description="Basic and acidic residues" evidence="7">
    <location>
        <begin position="1190"/>
        <end position="1204"/>
    </location>
</feature>
<feature type="compositionally biased region" description="Low complexity" evidence="7">
    <location>
        <begin position="1261"/>
        <end position="1288"/>
    </location>
</feature>
<feature type="active site" description="N6-AMP-lysine intermediate" evidence="6">
    <location>
        <position position="267"/>
    </location>
</feature>
<feature type="binding site" evidence="2">
    <location>
        <position position="265"/>
    </location>
    <ligand>
        <name>ATP</name>
        <dbReference type="ChEBI" id="CHEBI:30616"/>
    </ligand>
</feature>
<feature type="binding site" evidence="2">
    <location>
        <position position="267"/>
    </location>
    <ligand>
        <name>ATP</name>
        <dbReference type="ChEBI" id="CHEBI:30616"/>
    </ligand>
</feature>
<feature type="binding site" evidence="2">
    <location>
        <position position="272"/>
    </location>
    <ligand>
        <name>ATP</name>
        <dbReference type="ChEBI" id="CHEBI:30616"/>
    </ligand>
</feature>
<feature type="binding site" evidence="1">
    <location>
        <position position="287"/>
    </location>
    <ligand>
        <name>ATP</name>
        <dbReference type="ChEBI" id="CHEBI:30616"/>
    </ligand>
</feature>
<feature type="binding site" evidence="2">
    <location>
        <position position="317"/>
    </location>
    <ligand>
        <name>ATP</name>
        <dbReference type="ChEBI" id="CHEBI:30616"/>
    </ligand>
</feature>
<feature type="binding site" evidence="4">
    <location>
        <position position="317"/>
    </location>
    <ligand>
        <name>Mg(2+)</name>
        <dbReference type="ChEBI" id="CHEBI:18420"/>
        <label>1</label>
    </ligand>
</feature>
<feature type="binding site" evidence="2">
    <location>
        <position position="387"/>
    </location>
    <ligand>
        <name>ATP</name>
        <dbReference type="ChEBI" id="CHEBI:30616"/>
    </ligand>
</feature>
<feature type="binding site" evidence="2">
    <location>
        <position position="497"/>
    </location>
    <ligand>
        <name>ATP</name>
        <dbReference type="ChEBI" id="CHEBI:30616"/>
    </ligand>
</feature>
<feature type="binding site" evidence="4">
    <location>
        <position position="497"/>
    </location>
    <ligand>
        <name>Mg(2+)</name>
        <dbReference type="ChEBI" id="CHEBI:18420"/>
        <label>2</label>
    </ligand>
</feature>
<feature type="binding site" evidence="2">
    <location>
        <position position="502"/>
    </location>
    <ligand>
        <name>ATP</name>
        <dbReference type="ChEBI" id="CHEBI:30616"/>
    </ligand>
</feature>
<feature type="binding site" evidence="1">
    <location>
        <position position="513"/>
    </location>
    <ligand>
        <name>ATP</name>
        <dbReference type="ChEBI" id="CHEBI:30616"/>
    </ligand>
</feature>
<feature type="binding site" evidence="2">
    <location>
        <position position="519"/>
    </location>
    <ligand>
        <name>ATP</name>
        <dbReference type="ChEBI" id="CHEBI:30616"/>
    </ligand>
</feature>
<feature type="binding site" evidence="2">
    <location>
        <position position="521"/>
    </location>
    <ligand>
        <name>ATP</name>
        <dbReference type="ChEBI" id="CHEBI:30616"/>
    </ligand>
</feature>
<reference key="1">
    <citation type="journal article" date="2002" name="Nature">
        <title>Sequence and analysis of rice chromosome 4.</title>
        <authorList>
            <person name="Feng Q."/>
            <person name="Zhang Y."/>
            <person name="Hao P."/>
            <person name="Wang S."/>
            <person name="Fu G."/>
            <person name="Huang Y."/>
            <person name="Li Y."/>
            <person name="Zhu J."/>
            <person name="Liu Y."/>
            <person name="Hu X."/>
            <person name="Jia P."/>
            <person name="Zhang Y."/>
            <person name="Zhao Q."/>
            <person name="Ying K."/>
            <person name="Yu S."/>
            <person name="Tang Y."/>
            <person name="Weng Q."/>
            <person name="Zhang L."/>
            <person name="Lu Y."/>
            <person name="Mu J."/>
            <person name="Lu Y."/>
            <person name="Zhang L.S."/>
            <person name="Yu Z."/>
            <person name="Fan D."/>
            <person name="Liu X."/>
            <person name="Lu T."/>
            <person name="Li C."/>
            <person name="Wu Y."/>
            <person name="Sun T."/>
            <person name="Lei H."/>
            <person name="Li T."/>
            <person name="Hu H."/>
            <person name="Guan J."/>
            <person name="Wu M."/>
            <person name="Zhang R."/>
            <person name="Zhou B."/>
            <person name="Chen Z."/>
            <person name="Chen L."/>
            <person name="Jin Z."/>
            <person name="Wang R."/>
            <person name="Yin H."/>
            <person name="Cai Z."/>
            <person name="Ren S."/>
            <person name="Lv G."/>
            <person name="Gu W."/>
            <person name="Zhu G."/>
            <person name="Tu Y."/>
            <person name="Jia J."/>
            <person name="Zhang Y."/>
            <person name="Chen J."/>
            <person name="Kang H."/>
            <person name="Chen X."/>
            <person name="Shao C."/>
            <person name="Sun Y."/>
            <person name="Hu Q."/>
            <person name="Zhang X."/>
            <person name="Zhang W."/>
            <person name="Wang L."/>
            <person name="Ding C."/>
            <person name="Sheng H."/>
            <person name="Gu J."/>
            <person name="Chen S."/>
            <person name="Ni L."/>
            <person name="Zhu F."/>
            <person name="Chen W."/>
            <person name="Lan L."/>
            <person name="Lai Y."/>
            <person name="Cheng Z."/>
            <person name="Gu M."/>
            <person name="Jiang J."/>
            <person name="Li J."/>
            <person name="Hong G."/>
            <person name="Xue Y."/>
            <person name="Han B."/>
        </authorList>
    </citation>
    <scope>NUCLEOTIDE SEQUENCE [LARGE SCALE GENOMIC DNA]</scope>
    <source>
        <strain>cv. Nipponbare</strain>
    </source>
</reference>
<reference key="2">
    <citation type="journal article" date="2005" name="Nature">
        <title>The map-based sequence of the rice genome.</title>
        <authorList>
            <consortium name="International rice genome sequencing project (IRGSP)"/>
        </authorList>
    </citation>
    <scope>NUCLEOTIDE SEQUENCE [LARGE SCALE GENOMIC DNA]</scope>
    <source>
        <strain>cv. Nipponbare</strain>
    </source>
</reference>
<reference key="3">
    <citation type="journal article" date="2013" name="Rice">
        <title>Improvement of the Oryza sativa Nipponbare reference genome using next generation sequence and optical map data.</title>
        <authorList>
            <person name="Kawahara Y."/>
            <person name="de la Bastide M."/>
            <person name="Hamilton J.P."/>
            <person name="Kanamori H."/>
            <person name="McCombie W.R."/>
            <person name="Ouyang S."/>
            <person name="Schwartz D.C."/>
            <person name="Tanaka T."/>
            <person name="Wu J."/>
            <person name="Zhou S."/>
            <person name="Childs K.L."/>
            <person name="Davidson R.M."/>
            <person name="Lin H."/>
            <person name="Quesada-Ocampo L."/>
            <person name="Vaillancourt B."/>
            <person name="Sakai H."/>
            <person name="Lee S.S."/>
            <person name="Kim J."/>
            <person name="Numa H."/>
            <person name="Itoh T."/>
            <person name="Buell C.R."/>
            <person name="Matsumoto T."/>
        </authorList>
    </citation>
    <scope>GENOME REANNOTATION</scope>
    <source>
        <strain>cv. Nipponbare</strain>
    </source>
</reference>
<reference key="4">
    <citation type="submission" date="2006-10" db="EMBL/GenBank/DDBJ databases">
        <title>Oryza sativa full length cDNA.</title>
        <authorList>
            <consortium name="The rice full-length cDNA consortium"/>
        </authorList>
    </citation>
    <scope>NUCLEOTIDE SEQUENCE [LARGE SCALE MRNA] OF 1068-1322</scope>
    <source>
        <strain>cv. Nipponbare</strain>
    </source>
</reference>
<comment type="function">
    <text evidence="3">DNA ligase involved in DNA non-homologous end joining (NHEJ); required for double-strand break (DSB) repair.</text>
</comment>
<comment type="catalytic activity">
    <reaction evidence="6">
        <text>ATP + (deoxyribonucleotide)n-3'-hydroxyl + 5'-phospho-(deoxyribonucleotide)m = (deoxyribonucleotide)n+m + AMP + diphosphate.</text>
        <dbReference type="EC" id="6.5.1.1"/>
    </reaction>
</comment>
<comment type="cofactor">
    <cofactor evidence="2">
        <name>Mg(2+)</name>
        <dbReference type="ChEBI" id="CHEBI:18420"/>
    </cofactor>
</comment>
<comment type="subcellular location">
    <subcellularLocation>
        <location evidence="1">Nucleus</location>
    </subcellularLocation>
</comment>
<comment type="similarity">
    <text evidence="8">Belongs to the ATP-dependent DNA ligase family.</text>
</comment>
<protein>
    <recommendedName>
        <fullName>Putative DNA ligase 4</fullName>
        <ecNumber evidence="6">6.5.1.1</ecNumber>
    </recommendedName>
    <alternativeName>
        <fullName>DNA ligase IV</fullName>
    </alternativeName>
    <alternativeName>
        <fullName>Polydeoxyribonucleotide synthase [ATP] 4</fullName>
    </alternativeName>
</protein>
<dbReference type="EC" id="6.5.1.1" evidence="6"/>
<dbReference type="EMBL" id="AL662968">
    <property type="protein sequence ID" value="CAD41778.2"/>
    <property type="molecule type" value="Genomic_DNA"/>
</dbReference>
<dbReference type="EMBL" id="AP014960">
    <property type="status" value="NOT_ANNOTATED_CDS"/>
    <property type="molecule type" value="Genomic_DNA"/>
</dbReference>
<dbReference type="EMBL" id="AK242148">
    <property type="status" value="NOT_ANNOTATED_CDS"/>
    <property type="molecule type" value="mRNA"/>
</dbReference>
<dbReference type="SMR" id="Q7X7E9"/>
<dbReference type="FunCoup" id="Q7X7E9">
    <property type="interactions" value="1780"/>
</dbReference>
<dbReference type="STRING" id="39947.Q7X7E9"/>
<dbReference type="PaxDb" id="39947-Q7X7E9"/>
<dbReference type="eggNOG" id="KOG0966">
    <property type="taxonomic scope" value="Eukaryota"/>
</dbReference>
<dbReference type="InParanoid" id="Q7X7E9"/>
<dbReference type="Proteomes" id="UP000000763">
    <property type="component" value="Chromosome 4"/>
</dbReference>
<dbReference type="Proteomes" id="UP000059680">
    <property type="component" value="Chromosome 4"/>
</dbReference>
<dbReference type="GO" id="GO:0032807">
    <property type="term" value="C:DNA ligase IV complex"/>
    <property type="evidence" value="ECO:0000318"/>
    <property type="project" value="GO_Central"/>
</dbReference>
<dbReference type="GO" id="GO:0005524">
    <property type="term" value="F:ATP binding"/>
    <property type="evidence" value="ECO:0000318"/>
    <property type="project" value="GO_Central"/>
</dbReference>
<dbReference type="GO" id="GO:0003677">
    <property type="term" value="F:DNA binding"/>
    <property type="evidence" value="ECO:0000318"/>
    <property type="project" value="GO_Central"/>
</dbReference>
<dbReference type="GO" id="GO:0003910">
    <property type="term" value="F:DNA ligase (ATP) activity"/>
    <property type="evidence" value="ECO:0000250"/>
    <property type="project" value="UniProtKB"/>
</dbReference>
<dbReference type="GO" id="GO:0046872">
    <property type="term" value="F:metal ion binding"/>
    <property type="evidence" value="ECO:0007669"/>
    <property type="project" value="UniProtKB-KW"/>
</dbReference>
<dbReference type="GO" id="GO:0006310">
    <property type="term" value="P:DNA recombination"/>
    <property type="evidence" value="ECO:0007669"/>
    <property type="project" value="UniProtKB-KW"/>
</dbReference>
<dbReference type="GO" id="GO:0097680">
    <property type="term" value="P:double-strand break repair via classical nonhomologous end joining"/>
    <property type="evidence" value="ECO:0000250"/>
    <property type="project" value="UniProtKB"/>
</dbReference>
<dbReference type="GO" id="GO:0006303">
    <property type="term" value="P:double-strand break repair via nonhomologous end joining"/>
    <property type="evidence" value="ECO:0000318"/>
    <property type="project" value="GO_Central"/>
</dbReference>
<dbReference type="GO" id="GO:0006297">
    <property type="term" value="P:nucleotide-excision repair, DNA gap filling"/>
    <property type="evidence" value="ECO:0000318"/>
    <property type="project" value="GO_Central"/>
</dbReference>
<dbReference type="CDD" id="cd07903">
    <property type="entry name" value="Adenylation_DNA_ligase_IV"/>
    <property type="match status" value="1"/>
</dbReference>
<dbReference type="FunFam" id="1.10.3260.10:FF:000005">
    <property type="entry name" value="DNA ligase"/>
    <property type="match status" value="1"/>
</dbReference>
<dbReference type="FunFam" id="2.40.50.140:FF:000173">
    <property type="entry name" value="DNA ligase"/>
    <property type="match status" value="1"/>
</dbReference>
<dbReference type="FunFam" id="3.40.50.10190:FF:000044">
    <property type="entry name" value="DNA ligase"/>
    <property type="match status" value="1"/>
</dbReference>
<dbReference type="Gene3D" id="3.40.50.10190">
    <property type="entry name" value="BRCT domain"/>
    <property type="match status" value="2"/>
</dbReference>
<dbReference type="Gene3D" id="1.10.3260.10">
    <property type="entry name" value="DNA ligase, ATP-dependent, N-terminal domain"/>
    <property type="match status" value="1"/>
</dbReference>
<dbReference type="Gene3D" id="3.30.470.30">
    <property type="entry name" value="DNA ligase/mRNA capping enzyme"/>
    <property type="match status" value="3"/>
</dbReference>
<dbReference type="Gene3D" id="2.40.50.140">
    <property type="entry name" value="Nucleic acid-binding proteins"/>
    <property type="match status" value="1"/>
</dbReference>
<dbReference type="InterPro" id="IPR044125">
    <property type="entry name" value="Adenylation_DNA_ligase_IV"/>
</dbReference>
<dbReference type="InterPro" id="IPR001357">
    <property type="entry name" value="BRCT_dom"/>
</dbReference>
<dbReference type="InterPro" id="IPR036420">
    <property type="entry name" value="BRCT_dom_sf"/>
</dbReference>
<dbReference type="InterPro" id="IPR012309">
    <property type="entry name" value="DNA_ligase_ATP-dep_C"/>
</dbReference>
<dbReference type="InterPro" id="IPR012310">
    <property type="entry name" value="DNA_ligase_ATP-dep_cent"/>
</dbReference>
<dbReference type="InterPro" id="IPR016059">
    <property type="entry name" value="DNA_ligase_ATP-dep_CS"/>
</dbReference>
<dbReference type="InterPro" id="IPR012308">
    <property type="entry name" value="DNA_ligase_ATP-dep_N"/>
</dbReference>
<dbReference type="InterPro" id="IPR021536">
    <property type="entry name" value="DNA_ligase_IV_dom"/>
</dbReference>
<dbReference type="InterPro" id="IPR036599">
    <property type="entry name" value="DNA_ligase_N_sf"/>
</dbReference>
<dbReference type="InterPro" id="IPR029710">
    <property type="entry name" value="LIG4"/>
</dbReference>
<dbReference type="InterPro" id="IPR012340">
    <property type="entry name" value="NA-bd_OB-fold"/>
</dbReference>
<dbReference type="PANTHER" id="PTHR45997">
    <property type="entry name" value="DNA LIGASE 4"/>
    <property type="match status" value="1"/>
</dbReference>
<dbReference type="PANTHER" id="PTHR45997:SF1">
    <property type="entry name" value="DNA LIGASE 4"/>
    <property type="match status" value="1"/>
</dbReference>
<dbReference type="Pfam" id="PF04679">
    <property type="entry name" value="DNA_ligase_A_C"/>
    <property type="match status" value="1"/>
</dbReference>
<dbReference type="Pfam" id="PF01068">
    <property type="entry name" value="DNA_ligase_A_M"/>
    <property type="match status" value="1"/>
</dbReference>
<dbReference type="Pfam" id="PF04675">
    <property type="entry name" value="DNA_ligase_A_N"/>
    <property type="match status" value="1"/>
</dbReference>
<dbReference type="Pfam" id="PF11411">
    <property type="entry name" value="DNA_ligase_IV"/>
    <property type="match status" value="1"/>
</dbReference>
<dbReference type="SUPFAM" id="SSF117018">
    <property type="entry name" value="ATP-dependent DNA ligase DNA-binding domain"/>
    <property type="match status" value="1"/>
</dbReference>
<dbReference type="SUPFAM" id="SSF52113">
    <property type="entry name" value="BRCT domain"/>
    <property type="match status" value="2"/>
</dbReference>
<dbReference type="SUPFAM" id="SSF56091">
    <property type="entry name" value="DNA ligase/mRNA capping enzyme, catalytic domain"/>
    <property type="match status" value="1"/>
</dbReference>
<dbReference type="SUPFAM" id="SSF50249">
    <property type="entry name" value="Nucleic acid-binding proteins"/>
    <property type="match status" value="1"/>
</dbReference>
<dbReference type="PROSITE" id="PS50172">
    <property type="entry name" value="BRCT"/>
    <property type="match status" value="2"/>
</dbReference>
<dbReference type="PROSITE" id="PS00697">
    <property type="entry name" value="DNA_LIGASE_A1"/>
    <property type="match status" value="1"/>
</dbReference>
<dbReference type="PROSITE" id="PS00333">
    <property type="entry name" value="DNA_LIGASE_A2"/>
    <property type="match status" value="1"/>
</dbReference>
<dbReference type="PROSITE" id="PS50160">
    <property type="entry name" value="DNA_LIGASE_A3"/>
    <property type="match status" value="1"/>
</dbReference>
<organism>
    <name type="scientific">Oryza sativa subsp. japonica</name>
    <name type="common">Rice</name>
    <dbReference type="NCBI Taxonomy" id="39947"/>
    <lineage>
        <taxon>Eukaryota</taxon>
        <taxon>Viridiplantae</taxon>
        <taxon>Streptophyta</taxon>
        <taxon>Embryophyta</taxon>
        <taxon>Tracheophyta</taxon>
        <taxon>Spermatophyta</taxon>
        <taxon>Magnoliopsida</taxon>
        <taxon>Liliopsida</taxon>
        <taxon>Poales</taxon>
        <taxon>Poaceae</taxon>
        <taxon>BOP clade</taxon>
        <taxon>Oryzoideae</taxon>
        <taxon>Oryzeae</taxon>
        <taxon>Oryzinae</taxon>
        <taxon>Oryza</taxon>
        <taxon>Oryza sativa</taxon>
    </lineage>
</organism>
<name>DNLI4_ORYSJ</name>
<sequence length="1322" mass="149078">MAATVRFGLLVAMFQAMSRDRTAAKKRARLRALLDRAYGPGGRDDYFSALRLVLPGLDRERGSYGLKEAALASVLVDALGIAKDSPDAVRLTNWRRGGGFRNAGNFALVAAEVLQRRQGMTSGGLTIKEVNDALDRLAATENSVCLESEKLLLILDRSEKASILSSLIKKTNALEMKWLLMIILKDLKLGISEKSVFHEFHPDAEDLFNVTCDLRLVCEKLNDRSQRHKRQDIEVGKAVRPQLSMRVNNASSAWKKLHGKQVVAECKFDGDRIQIHKNGEEIHFFSRSFLDHSEYAPGMSKVIIENILVDRCILDGEMLVWDTVLNRFAEFGSNQEIAKAAKEGLETDRQLCCILEWIASYVLALCVNILSCQDFFFSNKRESYVAFDILYAGDTSVIHQSLTERHEILQKVVRPLKGHLEILVPTGGLNIHRPPDEPCWSILAHSLDDVEKFFKDTVDNRFFPTSPNTDELSNLSISLMIQFRFSDYSICYVLREEGIILKDLESKWEPGDRSGKWLKLKPDYIHAGADLDVIIIGGYYGSGRRGGEVAQFLVGLAVPSDDNSYPKRFLSFCRVGTGLSDEELDALVTKLKPHFRKNEYPKKPPRFYEVTNHSKERPDVWIESPDKQSVRFRKHLIYCITKCRSVIISITSDIRTIKSEVFAAPYSLRFPRIQRLRYDKPWHECLDVQAFVDIVHSSNGTTHRAADDDNDLKNVKNGGSFSMNLNDSVTHCIAAEKKATRQGRIIHYSWILDCCKEKRLLHLQPKFDPCLQPMHKFPEEIDSYADYFYWDIDISDLKQIFSNMDRAVVDSNMVHHYKKKYCADERFCFFQGCCVYFYHAPLVNADYNVISDLALKRVKQDLTMHGGQVCSILAPATHLIIVSVLQAYNFDMLYKSLPPAERRYLHDKRLQVVSNKWLEDSVEKQTRLPETTYSLKPDTLEEIEIERSEETVQPCNDKLEENEKADTSHVKHAPRKRGRPSSSASRTAKPAPRPVRRTRARRGNQHAKIDDVEPEESDHGETGLDDQIPDTDNISKMEVDSFDKDQVSARPVRRTRARRGKQHAKIDYGQSEESDPGETGQDDQRLDADYISKMEEDSSDRDQGAHPTAPRVVRRSRAQRGKWLAKIDRETGPGETGQDDKKLNADSISKMEEHAHDKDQEPPPGAQLITLDEQEPKGIKSSTTETPSSPKHERNQTVLRRDTAETTSSATCEKMEQMVDPLHAMLLDMIPSLGQMKTDVGNRVAEAKAETNPPWVGSSTSSYVAPVPQASASSASSSGVPAPHAGSSTQSTGVPAPDPTAGAPKKKKVSYKDVAGALLKDW</sequence>
<accession>Q7X7E9</accession>